<gene>
    <name evidence="1" type="primary">leuC</name>
    <name type="ordered locus">YE0652</name>
</gene>
<protein>
    <recommendedName>
        <fullName evidence="1">3-isopropylmalate dehydratase large subunit</fullName>
        <ecNumber evidence="1">4.2.1.33</ecNumber>
    </recommendedName>
    <alternativeName>
        <fullName evidence="1">Alpha-IPM isomerase</fullName>
        <shortName evidence="1">IPMI</shortName>
    </alternativeName>
    <alternativeName>
        <fullName evidence="1">Isopropylmalate isomerase</fullName>
    </alternativeName>
</protein>
<feature type="chain" id="PRO_1000063633" description="3-isopropylmalate dehydratase large subunit">
    <location>
        <begin position="1"/>
        <end position="476"/>
    </location>
</feature>
<feature type="binding site" evidence="1">
    <location>
        <position position="353"/>
    </location>
    <ligand>
        <name>[4Fe-4S] cluster</name>
        <dbReference type="ChEBI" id="CHEBI:49883"/>
    </ligand>
</feature>
<feature type="binding site" evidence="1">
    <location>
        <position position="413"/>
    </location>
    <ligand>
        <name>[4Fe-4S] cluster</name>
        <dbReference type="ChEBI" id="CHEBI:49883"/>
    </ligand>
</feature>
<feature type="binding site" evidence="1">
    <location>
        <position position="416"/>
    </location>
    <ligand>
        <name>[4Fe-4S] cluster</name>
        <dbReference type="ChEBI" id="CHEBI:49883"/>
    </ligand>
</feature>
<proteinExistence type="inferred from homology"/>
<organism>
    <name type="scientific">Yersinia enterocolitica serotype O:8 / biotype 1B (strain NCTC 13174 / 8081)</name>
    <dbReference type="NCBI Taxonomy" id="393305"/>
    <lineage>
        <taxon>Bacteria</taxon>
        <taxon>Pseudomonadati</taxon>
        <taxon>Pseudomonadota</taxon>
        <taxon>Gammaproteobacteria</taxon>
        <taxon>Enterobacterales</taxon>
        <taxon>Yersiniaceae</taxon>
        <taxon>Yersinia</taxon>
    </lineage>
</organism>
<reference key="1">
    <citation type="journal article" date="2006" name="PLoS Genet.">
        <title>The complete genome sequence and comparative genome analysis of the high pathogenicity Yersinia enterocolitica strain 8081.</title>
        <authorList>
            <person name="Thomson N.R."/>
            <person name="Howard S."/>
            <person name="Wren B.W."/>
            <person name="Holden M.T.G."/>
            <person name="Crossman L."/>
            <person name="Challis G.L."/>
            <person name="Churcher C."/>
            <person name="Mungall K."/>
            <person name="Brooks K."/>
            <person name="Chillingworth T."/>
            <person name="Feltwell T."/>
            <person name="Abdellah Z."/>
            <person name="Hauser H."/>
            <person name="Jagels K."/>
            <person name="Maddison M."/>
            <person name="Moule S."/>
            <person name="Sanders M."/>
            <person name="Whitehead S."/>
            <person name="Quail M.A."/>
            <person name="Dougan G."/>
            <person name="Parkhill J."/>
            <person name="Prentice M.B."/>
        </authorList>
    </citation>
    <scope>NUCLEOTIDE SEQUENCE [LARGE SCALE GENOMIC DNA]</scope>
    <source>
        <strain>NCTC 13174 / 8081</strain>
    </source>
</reference>
<keyword id="KW-0004">4Fe-4S</keyword>
<keyword id="KW-0028">Amino-acid biosynthesis</keyword>
<keyword id="KW-0100">Branched-chain amino acid biosynthesis</keyword>
<keyword id="KW-0408">Iron</keyword>
<keyword id="KW-0411">Iron-sulfur</keyword>
<keyword id="KW-0432">Leucine biosynthesis</keyword>
<keyword id="KW-0456">Lyase</keyword>
<keyword id="KW-0479">Metal-binding</keyword>
<comment type="function">
    <text evidence="1">Catalyzes the isomerization between 2-isopropylmalate and 3-isopropylmalate, via the formation of 2-isopropylmaleate.</text>
</comment>
<comment type="catalytic activity">
    <reaction evidence="1">
        <text>(2R,3S)-3-isopropylmalate = (2S)-2-isopropylmalate</text>
        <dbReference type="Rhea" id="RHEA:32287"/>
        <dbReference type="ChEBI" id="CHEBI:1178"/>
        <dbReference type="ChEBI" id="CHEBI:35121"/>
        <dbReference type="EC" id="4.2.1.33"/>
    </reaction>
</comment>
<comment type="cofactor">
    <cofactor evidence="1">
        <name>[4Fe-4S] cluster</name>
        <dbReference type="ChEBI" id="CHEBI:49883"/>
    </cofactor>
    <text evidence="1">Binds 1 [4Fe-4S] cluster per subunit.</text>
</comment>
<comment type="pathway">
    <text evidence="1">Amino-acid biosynthesis; L-leucine biosynthesis; L-leucine from 3-methyl-2-oxobutanoate: step 2/4.</text>
</comment>
<comment type="subunit">
    <text evidence="1">Heterodimer of LeuC and LeuD.</text>
</comment>
<comment type="similarity">
    <text evidence="1">Belongs to the aconitase/IPM isomerase family. LeuC type 1 subfamily.</text>
</comment>
<sequence>MGKTLYQNKTLYQKLYDAHIVYEAPNETPLLYIDRHLVHEVTSPQAFDGLRAMGRPVRQPGKTFATMDHNVSTQTKDINASGEMARIQMQELIKNCAEFGVSLYDLNHPFQGIVHVIGPEQGMTLPGMTIVCGDSHTATHGAFGSLAFGIGTSEVEHVLATQTLKQGRAKTMKIEVNGEVGPGITAKDIVLAIIGKTGSAGGTGHVVEFCGSAIEALSMEGRMTLCNMAIEMGAKAGLVAPDDTTFNYLKGRQFAPTGEQWEQGVAYWRTLKSDADAKFDTVVTLDAADIAPQVTWGTNPGQVIAVNQIIPAPESFSDPVERASAEKALAYMDLRPGIKLTEVAIDKVFIGSCTNSRIEDLRAAAAVAQGRKVASGVQAIVVPGSGPVKAQAEAEGLDKIFIEAGFEWRLPGCSMCLAMNNDRLEPGERCASTSNRNFEGRQGRGGRTHLVSPAMAAAAAVSGHFADVRDLSAATH</sequence>
<dbReference type="EC" id="4.2.1.33" evidence="1"/>
<dbReference type="EMBL" id="AM286415">
    <property type="protein sequence ID" value="CAL10763.1"/>
    <property type="molecule type" value="Genomic_DNA"/>
</dbReference>
<dbReference type="RefSeq" id="WP_005167044.1">
    <property type="nucleotide sequence ID" value="NC_008800.1"/>
</dbReference>
<dbReference type="RefSeq" id="YP_001005003.1">
    <property type="nucleotide sequence ID" value="NC_008800.1"/>
</dbReference>
<dbReference type="SMR" id="A1JJH5"/>
<dbReference type="KEGG" id="yen:YE0652"/>
<dbReference type="PATRIC" id="fig|393305.7.peg.746"/>
<dbReference type="eggNOG" id="COG0065">
    <property type="taxonomic scope" value="Bacteria"/>
</dbReference>
<dbReference type="HOGENOM" id="CLU_006714_3_4_6"/>
<dbReference type="OrthoDB" id="9802769at2"/>
<dbReference type="UniPathway" id="UPA00048">
    <property type="reaction ID" value="UER00071"/>
</dbReference>
<dbReference type="Proteomes" id="UP000000642">
    <property type="component" value="Chromosome"/>
</dbReference>
<dbReference type="GO" id="GO:0003861">
    <property type="term" value="F:3-isopropylmalate dehydratase activity"/>
    <property type="evidence" value="ECO:0007669"/>
    <property type="project" value="UniProtKB-UniRule"/>
</dbReference>
<dbReference type="GO" id="GO:0051539">
    <property type="term" value="F:4 iron, 4 sulfur cluster binding"/>
    <property type="evidence" value="ECO:0007669"/>
    <property type="project" value="UniProtKB-KW"/>
</dbReference>
<dbReference type="GO" id="GO:0046872">
    <property type="term" value="F:metal ion binding"/>
    <property type="evidence" value="ECO:0007669"/>
    <property type="project" value="UniProtKB-KW"/>
</dbReference>
<dbReference type="GO" id="GO:0009098">
    <property type="term" value="P:L-leucine biosynthetic process"/>
    <property type="evidence" value="ECO:0007669"/>
    <property type="project" value="UniProtKB-UniRule"/>
</dbReference>
<dbReference type="CDD" id="cd01583">
    <property type="entry name" value="IPMI"/>
    <property type="match status" value="1"/>
</dbReference>
<dbReference type="FunFam" id="3.30.499.10:FF:000006">
    <property type="entry name" value="3-isopropylmalate dehydratase large subunit"/>
    <property type="match status" value="1"/>
</dbReference>
<dbReference type="FunFam" id="3.30.499.10:FF:000007">
    <property type="entry name" value="3-isopropylmalate dehydratase large subunit"/>
    <property type="match status" value="1"/>
</dbReference>
<dbReference type="Gene3D" id="3.30.499.10">
    <property type="entry name" value="Aconitase, domain 3"/>
    <property type="match status" value="2"/>
</dbReference>
<dbReference type="HAMAP" id="MF_01026">
    <property type="entry name" value="LeuC_type1"/>
    <property type="match status" value="1"/>
</dbReference>
<dbReference type="InterPro" id="IPR004430">
    <property type="entry name" value="3-IsopropMal_deHydase_lsu"/>
</dbReference>
<dbReference type="InterPro" id="IPR015931">
    <property type="entry name" value="Acnase/IPM_dHydase_lsu_aba_1/3"/>
</dbReference>
<dbReference type="InterPro" id="IPR001030">
    <property type="entry name" value="Acoase/IPM_deHydtase_lsu_aba"/>
</dbReference>
<dbReference type="InterPro" id="IPR018136">
    <property type="entry name" value="Aconitase_4Fe-4S_BS"/>
</dbReference>
<dbReference type="InterPro" id="IPR036008">
    <property type="entry name" value="Aconitase_4Fe-4S_dom"/>
</dbReference>
<dbReference type="InterPro" id="IPR050067">
    <property type="entry name" value="IPM_dehydratase_rel_enz"/>
</dbReference>
<dbReference type="InterPro" id="IPR033941">
    <property type="entry name" value="IPMI_cat"/>
</dbReference>
<dbReference type="NCBIfam" id="TIGR00170">
    <property type="entry name" value="leuC"/>
    <property type="match status" value="1"/>
</dbReference>
<dbReference type="NCBIfam" id="NF004016">
    <property type="entry name" value="PRK05478.1"/>
    <property type="match status" value="1"/>
</dbReference>
<dbReference type="NCBIfam" id="NF009116">
    <property type="entry name" value="PRK12466.1"/>
    <property type="match status" value="1"/>
</dbReference>
<dbReference type="PANTHER" id="PTHR43822:SF9">
    <property type="entry name" value="3-ISOPROPYLMALATE DEHYDRATASE"/>
    <property type="match status" value="1"/>
</dbReference>
<dbReference type="PANTHER" id="PTHR43822">
    <property type="entry name" value="HOMOACONITASE, MITOCHONDRIAL-RELATED"/>
    <property type="match status" value="1"/>
</dbReference>
<dbReference type="Pfam" id="PF00330">
    <property type="entry name" value="Aconitase"/>
    <property type="match status" value="1"/>
</dbReference>
<dbReference type="PRINTS" id="PR00415">
    <property type="entry name" value="ACONITASE"/>
</dbReference>
<dbReference type="SUPFAM" id="SSF53732">
    <property type="entry name" value="Aconitase iron-sulfur domain"/>
    <property type="match status" value="1"/>
</dbReference>
<dbReference type="PROSITE" id="PS00450">
    <property type="entry name" value="ACONITASE_1"/>
    <property type="match status" value="1"/>
</dbReference>
<dbReference type="PROSITE" id="PS01244">
    <property type="entry name" value="ACONITASE_2"/>
    <property type="match status" value="1"/>
</dbReference>
<name>LEUC_YERE8</name>
<evidence type="ECO:0000255" key="1">
    <source>
        <dbReference type="HAMAP-Rule" id="MF_01026"/>
    </source>
</evidence>
<accession>A1JJH5</accession>